<protein>
    <recommendedName>
        <fullName evidence="1">D-aminoacyl-tRNA deacylase</fullName>
        <shortName evidence="1">DTD</shortName>
        <ecNumber evidence="1">3.1.1.96</ecNumber>
    </recommendedName>
    <alternativeName>
        <fullName evidence="1">Gly-tRNA(Ala) deacylase</fullName>
    </alternativeName>
</protein>
<evidence type="ECO:0000255" key="1">
    <source>
        <dbReference type="HAMAP-Rule" id="MF_00518"/>
    </source>
</evidence>
<organism>
    <name type="scientific">Streptococcus pneumoniae serotype 4 (strain ATCC BAA-334 / TIGR4)</name>
    <dbReference type="NCBI Taxonomy" id="170187"/>
    <lineage>
        <taxon>Bacteria</taxon>
        <taxon>Bacillati</taxon>
        <taxon>Bacillota</taxon>
        <taxon>Bacilli</taxon>
        <taxon>Lactobacillales</taxon>
        <taxon>Streptococcaceae</taxon>
        <taxon>Streptococcus</taxon>
    </lineage>
</organism>
<name>DTD_STRPN</name>
<dbReference type="EC" id="3.1.1.96" evidence="1"/>
<dbReference type="EMBL" id="AE005672">
    <property type="protein sequence ID" value="AAK75724.1"/>
    <property type="molecule type" value="Genomic_DNA"/>
</dbReference>
<dbReference type="PIR" id="C95191">
    <property type="entry name" value="C95191"/>
</dbReference>
<dbReference type="RefSeq" id="WP_000691405.1">
    <property type="nucleotide sequence ID" value="NZ_CP155539.1"/>
</dbReference>
<dbReference type="SMR" id="Q97PH3"/>
<dbReference type="PaxDb" id="170187-SP_1644"/>
<dbReference type="EnsemblBacteria" id="AAK75724">
    <property type="protein sequence ID" value="AAK75724"/>
    <property type="gene ID" value="SP_1644"/>
</dbReference>
<dbReference type="KEGG" id="spn:SP_1644"/>
<dbReference type="eggNOG" id="COG1490">
    <property type="taxonomic scope" value="Bacteria"/>
</dbReference>
<dbReference type="PhylomeDB" id="Q97PH3"/>
<dbReference type="BioCyc" id="SPNE170187:G1FZB-1663-MONOMER"/>
<dbReference type="Proteomes" id="UP000000585">
    <property type="component" value="Chromosome"/>
</dbReference>
<dbReference type="GO" id="GO:0005737">
    <property type="term" value="C:cytoplasm"/>
    <property type="evidence" value="ECO:0007669"/>
    <property type="project" value="UniProtKB-SubCell"/>
</dbReference>
<dbReference type="GO" id="GO:0051500">
    <property type="term" value="F:D-tyrosyl-tRNA(Tyr) deacylase activity"/>
    <property type="evidence" value="ECO:0007669"/>
    <property type="project" value="TreeGrafter"/>
</dbReference>
<dbReference type="GO" id="GO:0106026">
    <property type="term" value="F:Gly-tRNA(Ala) deacylase activity"/>
    <property type="evidence" value="ECO:0007669"/>
    <property type="project" value="UniProtKB-UniRule"/>
</dbReference>
<dbReference type="GO" id="GO:0043908">
    <property type="term" value="F:Ser(Gly)-tRNA(Ala) hydrolase activity"/>
    <property type="evidence" value="ECO:0007669"/>
    <property type="project" value="UniProtKB-UniRule"/>
</dbReference>
<dbReference type="GO" id="GO:0000049">
    <property type="term" value="F:tRNA binding"/>
    <property type="evidence" value="ECO:0007669"/>
    <property type="project" value="UniProtKB-UniRule"/>
</dbReference>
<dbReference type="GO" id="GO:0019478">
    <property type="term" value="P:D-amino acid catabolic process"/>
    <property type="evidence" value="ECO:0007669"/>
    <property type="project" value="UniProtKB-UniRule"/>
</dbReference>
<dbReference type="CDD" id="cd00563">
    <property type="entry name" value="Dtyr_deacylase"/>
    <property type="match status" value="1"/>
</dbReference>
<dbReference type="FunFam" id="3.50.80.10:FF:000001">
    <property type="entry name" value="D-aminoacyl-tRNA deacylase"/>
    <property type="match status" value="1"/>
</dbReference>
<dbReference type="Gene3D" id="3.50.80.10">
    <property type="entry name" value="D-tyrosyl-tRNA(Tyr) deacylase"/>
    <property type="match status" value="1"/>
</dbReference>
<dbReference type="HAMAP" id="MF_00518">
    <property type="entry name" value="Deacylase_Dtd"/>
    <property type="match status" value="1"/>
</dbReference>
<dbReference type="InterPro" id="IPR003732">
    <property type="entry name" value="Daa-tRNA_deacyls_DTD"/>
</dbReference>
<dbReference type="InterPro" id="IPR023509">
    <property type="entry name" value="DTD-like_sf"/>
</dbReference>
<dbReference type="NCBIfam" id="TIGR00256">
    <property type="entry name" value="D-aminoacyl-tRNA deacylase"/>
    <property type="match status" value="1"/>
</dbReference>
<dbReference type="PANTHER" id="PTHR10472:SF5">
    <property type="entry name" value="D-AMINOACYL-TRNA DEACYLASE 1"/>
    <property type="match status" value="1"/>
</dbReference>
<dbReference type="PANTHER" id="PTHR10472">
    <property type="entry name" value="D-TYROSYL-TRNA TYR DEACYLASE"/>
    <property type="match status" value="1"/>
</dbReference>
<dbReference type="Pfam" id="PF02580">
    <property type="entry name" value="Tyr_Deacylase"/>
    <property type="match status" value="1"/>
</dbReference>
<dbReference type="SUPFAM" id="SSF69500">
    <property type="entry name" value="DTD-like"/>
    <property type="match status" value="1"/>
</dbReference>
<feature type="chain" id="PRO_0000164601" description="D-aminoacyl-tRNA deacylase">
    <location>
        <begin position="1"/>
        <end position="147"/>
    </location>
</feature>
<feature type="short sequence motif" description="Gly-cisPro motif, important for rejection of L-amino acids" evidence="1">
    <location>
        <begin position="136"/>
        <end position="137"/>
    </location>
</feature>
<accession>Q97PH3</accession>
<sequence length="147" mass="16242">MKIIIQRVKKAQVSIEGQIQGKINQGLLLLVGVGPEDQEEDLDYAVRKLVNMRIFSDAEGKMNLSVKDIEGEILSISQFTLFADTKRGNRPAFTGAAKPDMASDFYDAFNQKLAQEVPVQTGIFGADMQVELVNNGPVTIILDTKKR</sequence>
<gene>
    <name evidence="1" type="primary">dtd</name>
    <name type="ordered locus">SP_1644</name>
</gene>
<proteinExistence type="inferred from homology"/>
<comment type="function">
    <text evidence="1">An aminoacyl-tRNA editing enzyme that deacylates mischarged D-aminoacyl-tRNAs. Also deacylates mischarged glycyl-tRNA(Ala), protecting cells against glycine mischarging by AlaRS. Acts via tRNA-based rather than protein-based catalysis; rejects L-amino acids rather than detecting D-amino acids in the active site. By recycling D-aminoacyl-tRNA to D-amino acids and free tRNA molecules, this enzyme counteracts the toxicity associated with the formation of D-aminoacyl-tRNA entities in vivo and helps enforce protein L-homochirality.</text>
</comment>
<comment type="catalytic activity">
    <reaction evidence="1">
        <text>glycyl-tRNA(Ala) + H2O = tRNA(Ala) + glycine + H(+)</text>
        <dbReference type="Rhea" id="RHEA:53744"/>
        <dbReference type="Rhea" id="RHEA-COMP:9657"/>
        <dbReference type="Rhea" id="RHEA-COMP:13640"/>
        <dbReference type="ChEBI" id="CHEBI:15377"/>
        <dbReference type="ChEBI" id="CHEBI:15378"/>
        <dbReference type="ChEBI" id="CHEBI:57305"/>
        <dbReference type="ChEBI" id="CHEBI:78442"/>
        <dbReference type="ChEBI" id="CHEBI:78522"/>
        <dbReference type="EC" id="3.1.1.96"/>
    </reaction>
</comment>
<comment type="catalytic activity">
    <reaction evidence="1">
        <text>a D-aminoacyl-tRNA + H2O = a tRNA + a D-alpha-amino acid + H(+)</text>
        <dbReference type="Rhea" id="RHEA:13953"/>
        <dbReference type="Rhea" id="RHEA-COMP:10123"/>
        <dbReference type="Rhea" id="RHEA-COMP:10124"/>
        <dbReference type="ChEBI" id="CHEBI:15377"/>
        <dbReference type="ChEBI" id="CHEBI:15378"/>
        <dbReference type="ChEBI" id="CHEBI:59871"/>
        <dbReference type="ChEBI" id="CHEBI:78442"/>
        <dbReference type="ChEBI" id="CHEBI:79333"/>
        <dbReference type="EC" id="3.1.1.96"/>
    </reaction>
</comment>
<comment type="subunit">
    <text evidence="1">Homodimer.</text>
</comment>
<comment type="subcellular location">
    <subcellularLocation>
        <location evidence="1">Cytoplasm</location>
    </subcellularLocation>
</comment>
<comment type="domain">
    <text evidence="1">A Gly-cisPro motif from one monomer fits into the active site of the other monomer to allow specific chiral rejection of L-amino acids.</text>
</comment>
<comment type="similarity">
    <text evidence="1">Belongs to the DTD family.</text>
</comment>
<keyword id="KW-0963">Cytoplasm</keyword>
<keyword id="KW-0378">Hydrolase</keyword>
<keyword id="KW-1185">Reference proteome</keyword>
<keyword id="KW-0694">RNA-binding</keyword>
<keyword id="KW-0820">tRNA-binding</keyword>
<reference key="1">
    <citation type="journal article" date="2001" name="Science">
        <title>Complete genome sequence of a virulent isolate of Streptococcus pneumoniae.</title>
        <authorList>
            <person name="Tettelin H."/>
            <person name="Nelson K.E."/>
            <person name="Paulsen I.T."/>
            <person name="Eisen J.A."/>
            <person name="Read T.D."/>
            <person name="Peterson S.N."/>
            <person name="Heidelberg J.F."/>
            <person name="DeBoy R.T."/>
            <person name="Haft D.H."/>
            <person name="Dodson R.J."/>
            <person name="Durkin A.S."/>
            <person name="Gwinn M.L."/>
            <person name="Kolonay J.F."/>
            <person name="Nelson W.C."/>
            <person name="Peterson J.D."/>
            <person name="Umayam L.A."/>
            <person name="White O."/>
            <person name="Salzberg S.L."/>
            <person name="Lewis M.R."/>
            <person name="Radune D."/>
            <person name="Holtzapple E.K."/>
            <person name="Khouri H.M."/>
            <person name="Wolf A.M."/>
            <person name="Utterback T.R."/>
            <person name="Hansen C.L."/>
            <person name="McDonald L.A."/>
            <person name="Feldblyum T.V."/>
            <person name="Angiuoli S.V."/>
            <person name="Dickinson T."/>
            <person name="Hickey E.K."/>
            <person name="Holt I.E."/>
            <person name="Loftus B.J."/>
            <person name="Yang F."/>
            <person name="Smith H.O."/>
            <person name="Venter J.C."/>
            <person name="Dougherty B.A."/>
            <person name="Morrison D.A."/>
            <person name="Hollingshead S.K."/>
            <person name="Fraser C.M."/>
        </authorList>
    </citation>
    <scope>NUCLEOTIDE SEQUENCE [LARGE SCALE GENOMIC DNA]</scope>
    <source>
        <strain>ATCC BAA-334 / TIGR4</strain>
    </source>
</reference>